<dbReference type="EC" id="2.3.1.191" evidence="1"/>
<dbReference type="EMBL" id="CP001340">
    <property type="protein sequence ID" value="ACL95455.1"/>
    <property type="molecule type" value="Genomic_DNA"/>
</dbReference>
<dbReference type="RefSeq" id="WP_010919779.1">
    <property type="nucleotide sequence ID" value="NC_011916.1"/>
</dbReference>
<dbReference type="RefSeq" id="YP_002517363.1">
    <property type="nucleotide sequence ID" value="NC_011916.1"/>
</dbReference>
<dbReference type="SMR" id="B8GWR3"/>
<dbReference type="GeneID" id="7333318"/>
<dbReference type="KEGG" id="ccs:CCNA_01990"/>
<dbReference type="PATRIC" id="fig|565050.3.peg.1949"/>
<dbReference type="HOGENOM" id="CLU_049865_0_2_5"/>
<dbReference type="OrthoDB" id="9784739at2"/>
<dbReference type="PhylomeDB" id="B8GWR3"/>
<dbReference type="UniPathway" id="UPA00973"/>
<dbReference type="Proteomes" id="UP000001364">
    <property type="component" value="Chromosome"/>
</dbReference>
<dbReference type="GO" id="GO:0016020">
    <property type="term" value="C:membrane"/>
    <property type="evidence" value="ECO:0007669"/>
    <property type="project" value="GOC"/>
</dbReference>
<dbReference type="GO" id="GO:0016410">
    <property type="term" value="F:N-acyltransferase activity"/>
    <property type="evidence" value="ECO:0007669"/>
    <property type="project" value="InterPro"/>
</dbReference>
<dbReference type="GO" id="GO:0009245">
    <property type="term" value="P:lipid A biosynthetic process"/>
    <property type="evidence" value="ECO:0007669"/>
    <property type="project" value="UniProtKB-UniRule"/>
</dbReference>
<dbReference type="CDD" id="cd03352">
    <property type="entry name" value="LbH_LpxD"/>
    <property type="match status" value="1"/>
</dbReference>
<dbReference type="Gene3D" id="2.160.10.10">
    <property type="entry name" value="Hexapeptide repeat proteins"/>
    <property type="match status" value="1"/>
</dbReference>
<dbReference type="Gene3D" id="3.40.1390.10">
    <property type="entry name" value="MurE/MurF, N-terminal domain"/>
    <property type="match status" value="1"/>
</dbReference>
<dbReference type="HAMAP" id="MF_00523">
    <property type="entry name" value="LpxD"/>
    <property type="match status" value="1"/>
</dbReference>
<dbReference type="InterPro" id="IPR001451">
    <property type="entry name" value="Hexapep"/>
</dbReference>
<dbReference type="InterPro" id="IPR018357">
    <property type="entry name" value="Hexapep_transf_CS"/>
</dbReference>
<dbReference type="InterPro" id="IPR007691">
    <property type="entry name" value="LpxD"/>
</dbReference>
<dbReference type="InterPro" id="IPR011004">
    <property type="entry name" value="Trimer_LpxA-like_sf"/>
</dbReference>
<dbReference type="InterPro" id="IPR020573">
    <property type="entry name" value="UDP_GlcNAc_AcTrfase_non-rep"/>
</dbReference>
<dbReference type="NCBIfam" id="TIGR01853">
    <property type="entry name" value="lipid_A_lpxD"/>
    <property type="match status" value="1"/>
</dbReference>
<dbReference type="NCBIfam" id="NF002060">
    <property type="entry name" value="PRK00892.1"/>
    <property type="match status" value="1"/>
</dbReference>
<dbReference type="PANTHER" id="PTHR43378">
    <property type="entry name" value="UDP-3-O-ACYLGLUCOSAMINE N-ACYLTRANSFERASE"/>
    <property type="match status" value="1"/>
</dbReference>
<dbReference type="PANTHER" id="PTHR43378:SF2">
    <property type="entry name" value="UDP-3-O-ACYLGLUCOSAMINE N-ACYLTRANSFERASE 1, MITOCHONDRIAL-RELATED"/>
    <property type="match status" value="1"/>
</dbReference>
<dbReference type="Pfam" id="PF00132">
    <property type="entry name" value="Hexapep"/>
    <property type="match status" value="2"/>
</dbReference>
<dbReference type="Pfam" id="PF04613">
    <property type="entry name" value="LpxD"/>
    <property type="match status" value="1"/>
</dbReference>
<dbReference type="SUPFAM" id="SSF51161">
    <property type="entry name" value="Trimeric LpxA-like enzymes"/>
    <property type="match status" value="1"/>
</dbReference>
<dbReference type="PROSITE" id="PS00101">
    <property type="entry name" value="HEXAPEP_TRANSFERASES"/>
    <property type="match status" value="2"/>
</dbReference>
<sequence>MPDPRFFDSLGPALLSELAQAGAATLADAALGERVITHAAPLDASDAQAITFFSDAKRKDAAASTRAGACFVRPEHQGFLPPTCAALVTGRPQAAWAAAANRLHAPRRHEAGAPSLHPDAALEDGVALAPNVTIGQGASIGRGTRIGPGVVIGPGVVIGRYCRIGANAVIGFAMLGDNVAISAGAVIGEAGFGAALGPRGMVDLPQLGRVVIQDNVTLGANSCVDRGAFGDTTIGENTKIDNLVHVAHNVRIGRNCVLAAYTGVSGSTVVGDGVAFGGKAGVADHLNIGSGASIGAAASVFKDVPDGETWTGFPARPLKRWLRETAWLSRMAGGRGTRG</sequence>
<proteinExistence type="inferred from homology"/>
<feature type="chain" id="PRO_1000190892" description="UDP-3-O-acylglucosamine N-acyltransferase">
    <location>
        <begin position="1"/>
        <end position="339"/>
    </location>
</feature>
<feature type="active site" description="Proton acceptor" evidence="1">
    <location>
        <position position="248"/>
    </location>
</feature>
<evidence type="ECO:0000255" key="1">
    <source>
        <dbReference type="HAMAP-Rule" id="MF_00523"/>
    </source>
</evidence>
<accession>B8GWR3</accession>
<gene>
    <name evidence="1" type="primary">lpxD</name>
    <name type="ordered locus">CCNA_01990</name>
</gene>
<protein>
    <recommendedName>
        <fullName evidence="1">UDP-3-O-acylglucosamine N-acyltransferase</fullName>
        <ecNumber evidence="1">2.3.1.191</ecNumber>
    </recommendedName>
</protein>
<keyword id="KW-0012">Acyltransferase</keyword>
<keyword id="KW-0441">Lipid A biosynthesis</keyword>
<keyword id="KW-0444">Lipid biosynthesis</keyword>
<keyword id="KW-0443">Lipid metabolism</keyword>
<keyword id="KW-1185">Reference proteome</keyword>
<keyword id="KW-0677">Repeat</keyword>
<keyword id="KW-0808">Transferase</keyword>
<name>LPXD_CAUVN</name>
<organism>
    <name type="scientific">Caulobacter vibrioides (strain NA1000 / CB15N)</name>
    <name type="common">Caulobacter crescentus</name>
    <dbReference type="NCBI Taxonomy" id="565050"/>
    <lineage>
        <taxon>Bacteria</taxon>
        <taxon>Pseudomonadati</taxon>
        <taxon>Pseudomonadota</taxon>
        <taxon>Alphaproteobacteria</taxon>
        <taxon>Caulobacterales</taxon>
        <taxon>Caulobacteraceae</taxon>
        <taxon>Caulobacter</taxon>
    </lineage>
</organism>
<reference key="1">
    <citation type="journal article" date="2010" name="J. Bacteriol.">
        <title>The genetic basis of laboratory adaptation in Caulobacter crescentus.</title>
        <authorList>
            <person name="Marks M.E."/>
            <person name="Castro-Rojas C.M."/>
            <person name="Teiling C."/>
            <person name="Du L."/>
            <person name="Kapatral V."/>
            <person name="Walunas T.L."/>
            <person name="Crosson S."/>
        </authorList>
    </citation>
    <scope>NUCLEOTIDE SEQUENCE [LARGE SCALE GENOMIC DNA]</scope>
    <source>
        <strain>NA1000 / CB15N</strain>
    </source>
</reference>
<comment type="function">
    <text evidence="1">Catalyzes the N-acylation of UDP-3-O-acylglucosamine using 3-hydroxyacyl-ACP as the acyl donor. Is involved in the biosynthesis of lipid A, a phosphorylated glycolipid that anchors the lipopolysaccharide to the outer membrane of the cell.</text>
</comment>
<comment type="catalytic activity">
    <reaction evidence="1">
        <text>a UDP-3-O-[(3R)-3-hydroxyacyl]-alpha-D-glucosamine + a (3R)-hydroxyacyl-[ACP] = a UDP-2-N,3-O-bis[(3R)-3-hydroxyacyl]-alpha-D-glucosamine + holo-[ACP] + H(+)</text>
        <dbReference type="Rhea" id="RHEA:53836"/>
        <dbReference type="Rhea" id="RHEA-COMP:9685"/>
        <dbReference type="Rhea" id="RHEA-COMP:9945"/>
        <dbReference type="ChEBI" id="CHEBI:15378"/>
        <dbReference type="ChEBI" id="CHEBI:64479"/>
        <dbReference type="ChEBI" id="CHEBI:78827"/>
        <dbReference type="ChEBI" id="CHEBI:137740"/>
        <dbReference type="ChEBI" id="CHEBI:137748"/>
        <dbReference type="EC" id="2.3.1.191"/>
    </reaction>
</comment>
<comment type="pathway">
    <text evidence="1">Bacterial outer membrane biogenesis; LPS lipid A biosynthesis.</text>
</comment>
<comment type="subunit">
    <text evidence="1">Homotrimer.</text>
</comment>
<comment type="similarity">
    <text evidence="1">Belongs to the transferase hexapeptide repeat family. LpxD subfamily.</text>
</comment>